<protein>
    <recommendedName>
        <fullName>Ras-related protein Rab-5A</fullName>
        <ecNumber evidence="2">3.6.5.2</ecNumber>
    </recommendedName>
    <alternativeName>
        <fullName evidence="6">Small GTP-binding protein rab5</fullName>
    </alternativeName>
</protein>
<name>RAB5A_RAT</name>
<reference key="1">
    <citation type="submission" date="1998-06" db="EMBL/GenBank/DDBJ databases">
        <title>Small GTP-binding protein rab5 from rat type II pneumocytes.</title>
        <authorList>
            <person name="Looman A.C."/>
            <person name="Hofsommer S."/>
            <person name="Stevens P.A."/>
        </authorList>
    </citation>
    <scope>NUCLEOTIDE SEQUENCE [MRNA]</scope>
    <source>
        <strain>Wistar</strain>
    </source>
</reference>
<reference key="2">
    <citation type="journal article" date="2004" name="Nature">
        <title>Genome sequence of the Brown Norway rat yields insights into mammalian evolution.</title>
        <authorList>
            <person name="Gibbs R.A."/>
            <person name="Weinstock G.M."/>
            <person name="Metzker M.L."/>
            <person name="Muzny D.M."/>
            <person name="Sodergren E.J."/>
            <person name="Scherer S."/>
            <person name="Scott G."/>
            <person name="Steffen D."/>
            <person name="Worley K.C."/>
            <person name="Burch P.E."/>
            <person name="Okwuonu G."/>
            <person name="Hines S."/>
            <person name="Lewis L."/>
            <person name="Deramo C."/>
            <person name="Delgado O."/>
            <person name="Dugan-Rocha S."/>
            <person name="Miner G."/>
            <person name="Morgan M."/>
            <person name="Hawes A."/>
            <person name="Gill R."/>
            <person name="Holt R.A."/>
            <person name="Adams M.D."/>
            <person name="Amanatides P.G."/>
            <person name="Baden-Tillson H."/>
            <person name="Barnstead M."/>
            <person name="Chin S."/>
            <person name="Evans C.A."/>
            <person name="Ferriera S."/>
            <person name="Fosler C."/>
            <person name="Glodek A."/>
            <person name="Gu Z."/>
            <person name="Jennings D."/>
            <person name="Kraft C.L."/>
            <person name="Nguyen T."/>
            <person name="Pfannkoch C.M."/>
            <person name="Sitter C."/>
            <person name="Sutton G.G."/>
            <person name="Venter J.C."/>
            <person name="Woodage T."/>
            <person name="Smith D."/>
            <person name="Lee H.-M."/>
            <person name="Gustafson E."/>
            <person name="Cahill P."/>
            <person name="Kana A."/>
            <person name="Doucette-Stamm L."/>
            <person name="Weinstock K."/>
            <person name="Fechtel K."/>
            <person name="Weiss R.B."/>
            <person name="Dunn D.M."/>
            <person name="Green E.D."/>
            <person name="Blakesley R.W."/>
            <person name="Bouffard G.G."/>
            <person name="De Jong P.J."/>
            <person name="Osoegawa K."/>
            <person name="Zhu B."/>
            <person name="Marra M."/>
            <person name="Schein J."/>
            <person name="Bosdet I."/>
            <person name="Fjell C."/>
            <person name="Jones S."/>
            <person name="Krzywinski M."/>
            <person name="Mathewson C."/>
            <person name="Siddiqui A."/>
            <person name="Wye N."/>
            <person name="McPherson J."/>
            <person name="Zhao S."/>
            <person name="Fraser C.M."/>
            <person name="Shetty J."/>
            <person name="Shatsman S."/>
            <person name="Geer K."/>
            <person name="Chen Y."/>
            <person name="Abramzon S."/>
            <person name="Nierman W.C."/>
            <person name="Havlak P.H."/>
            <person name="Chen R."/>
            <person name="Durbin K.J."/>
            <person name="Egan A."/>
            <person name="Ren Y."/>
            <person name="Song X.-Z."/>
            <person name="Li B."/>
            <person name="Liu Y."/>
            <person name="Qin X."/>
            <person name="Cawley S."/>
            <person name="Cooney A.J."/>
            <person name="D'Souza L.M."/>
            <person name="Martin K."/>
            <person name="Wu J.Q."/>
            <person name="Gonzalez-Garay M.L."/>
            <person name="Jackson A.R."/>
            <person name="Kalafus K.J."/>
            <person name="McLeod M.P."/>
            <person name="Milosavljevic A."/>
            <person name="Virk D."/>
            <person name="Volkov A."/>
            <person name="Wheeler D.A."/>
            <person name="Zhang Z."/>
            <person name="Bailey J.A."/>
            <person name="Eichler E.E."/>
            <person name="Tuzun E."/>
            <person name="Birney E."/>
            <person name="Mongin E."/>
            <person name="Ureta-Vidal A."/>
            <person name="Woodwark C."/>
            <person name="Zdobnov E."/>
            <person name="Bork P."/>
            <person name="Suyama M."/>
            <person name="Torrents D."/>
            <person name="Alexandersson M."/>
            <person name="Trask B.J."/>
            <person name="Young J.M."/>
            <person name="Huang H."/>
            <person name="Wang H."/>
            <person name="Xing H."/>
            <person name="Daniels S."/>
            <person name="Gietzen D."/>
            <person name="Schmidt J."/>
            <person name="Stevens K."/>
            <person name="Vitt U."/>
            <person name="Wingrove J."/>
            <person name="Camara F."/>
            <person name="Mar Alba M."/>
            <person name="Abril J.F."/>
            <person name="Guigo R."/>
            <person name="Smit A."/>
            <person name="Dubchak I."/>
            <person name="Rubin E.M."/>
            <person name="Couronne O."/>
            <person name="Poliakov A."/>
            <person name="Huebner N."/>
            <person name="Ganten D."/>
            <person name="Goesele C."/>
            <person name="Hummel O."/>
            <person name="Kreitler T."/>
            <person name="Lee Y.-A."/>
            <person name="Monti J."/>
            <person name="Schulz H."/>
            <person name="Zimdahl H."/>
            <person name="Himmelbauer H."/>
            <person name="Lehrach H."/>
            <person name="Jacob H.J."/>
            <person name="Bromberg S."/>
            <person name="Gullings-Handley J."/>
            <person name="Jensen-Seaman M.I."/>
            <person name="Kwitek A.E."/>
            <person name="Lazar J."/>
            <person name="Pasko D."/>
            <person name="Tonellato P.J."/>
            <person name="Twigger S."/>
            <person name="Ponting C.P."/>
            <person name="Duarte J.M."/>
            <person name="Rice S."/>
            <person name="Goodstadt L."/>
            <person name="Beatson S.A."/>
            <person name="Emes R.D."/>
            <person name="Winter E.E."/>
            <person name="Webber C."/>
            <person name="Brandt P."/>
            <person name="Nyakatura G."/>
            <person name="Adetobi M."/>
            <person name="Chiaromonte F."/>
            <person name="Elnitski L."/>
            <person name="Eswara P."/>
            <person name="Hardison R.C."/>
            <person name="Hou M."/>
            <person name="Kolbe D."/>
            <person name="Makova K."/>
            <person name="Miller W."/>
            <person name="Nekrutenko A."/>
            <person name="Riemer C."/>
            <person name="Schwartz S."/>
            <person name="Taylor J."/>
            <person name="Yang S."/>
            <person name="Zhang Y."/>
            <person name="Lindpaintner K."/>
            <person name="Andrews T.D."/>
            <person name="Caccamo M."/>
            <person name="Clamp M."/>
            <person name="Clarke L."/>
            <person name="Curwen V."/>
            <person name="Durbin R.M."/>
            <person name="Eyras E."/>
            <person name="Searle S.M."/>
            <person name="Cooper G.M."/>
            <person name="Batzoglou S."/>
            <person name="Brudno M."/>
            <person name="Sidow A."/>
            <person name="Stone E.A."/>
            <person name="Payseur B.A."/>
            <person name="Bourque G."/>
            <person name="Lopez-Otin C."/>
            <person name="Puente X.S."/>
            <person name="Chakrabarti K."/>
            <person name="Chatterji S."/>
            <person name="Dewey C."/>
            <person name="Pachter L."/>
            <person name="Bray N."/>
            <person name="Yap V.B."/>
            <person name="Caspi A."/>
            <person name="Tesler G."/>
            <person name="Pevzner P.A."/>
            <person name="Haussler D."/>
            <person name="Roskin K.M."/>
            <person name="Baertsch R."/>
            <person name="Clawson H."/>
            <person name="Furey T.S."/>
            <person name="Hinrichs A.S."/>
            <person name="Karolchik D."/>
            <person name="Kent W.J."/>
            <person name="Rosenbloom K.R."/>
            <person name="Trumbower H."/>
            <person name="Weirauch M."/>
            <person name="Cooper D.N."/>
            <person name="Stenson P.D."/>
            <person name="Ma B."/>
            <person name="Brent M."/>
            <person name="Arumugam M."/>
            <person name="Shteynberg D."/>
            <person name="Copley R.R."/>
            <person name="Taylor M.S."/>
            <person name="Riethman H."/>
            <person name="Mudunuri U."/>
            <person name="Peterson J."/>
            <person name="Guyer M."/>
            <person name="Felsenfeld A."/>
            <person name="Old S."/>
            <person name="Mockrin S."/>
            <person name="Collins F.S."/>
        </authorList>
    </citation>
    <scope>NUCLEOTIDE SEQUENCE [LARGE SCALE GENOMIC DNA]</scope>
    <source>
        <strain>Brown Norway</strain>
    </source>
</reference>
<reference key="3">
    <citation type="submission" date="2005-07" db="EMBL/GenBank/DDBJ databases">
        <authorList>
            <person name="Mural R.J."/>
            <person name="Adams M.D."/>
            <person name="Myers E.W."/>
            <person name="Smith H.O."/>
            <person name="Venter J.C."/>
        </authorList>
    </citation>
    <scope>NUCLEOTIDE SEQUENCE [LARGE SCALE GENOMIC DNA]</scope>
    <source>
        <strain>Brown Norway</strain>
    </source>
</reference>
<reference key="4">
    <citation type="journal article" date="2004" name="Genome Res.">
        <title>The status, quality, and expansion of the NIH full-length cDNA project: the Mammalian Gene Collection (MGC).</title>
        <authorList>
            <consortium name="The MGC Project Team"/>
        </authorList>
    </citation>
    <scope>NUCLEOTIDE SEQUENCE [LARGE SCALE MRNA]</scope>
    <source>
        <tissue>Kidney</tissue>
        <tissue>Lung</tissue>
    </source>
</reference>
<gene>
    <name evidence="8" type="primary">Rab5a</name>
</gene>
<evidence type="ECO:0000250" key="1">
    <source>
        <dbReference type="UniProtKB" id="P18066"/>
    </source>
</evidence>
<evidence type="ECO:0000250" key="2">
    <source>
        <dbReference type="UniProtKB" id="P20339"/>
    </source>
</evidence>
<evidence type="ECO:0000250" key="3">
    <source>
        <dbReference type="UniProtKB" id="Q0IIG7"/>
    </source>
</evidence>
<evidence type="ECO:0000250" key="4">
    <source>
        <dbReference type="UniProtKB" id="Q9CQD1"/>
    </source>
</evidence>
<evidence type="ECO:0000256" key="5">
    <source>
        <dbReference type="SAM" id="MobiDB-lite"/>
    </source>
</evidence>
<evidence type="ECO:0000303" key="6">
    <source ref="1"/>
</evidence>
<evidence type="ECO:0000305" key="7"/>
<evidence type="ECO:0000312" key="8">
    <source>
        <dbReference type="RGD" id="620936"/>
    </source>
</evidence>
<sequence>MANRGATRPNGPNTGNKICQFKLVLLGESAVGKSSLVLRFVKGQFHEFQESTIGAAFLTQTVCLDDTTVKFEIWDTAGQERYHSLAPMYYRGAQAAIVVYDITNEESFSRAKNWVKELQRQASPNIVIALSGNKADLANKRAVDFQEAQSYADDNSLLFMETSAKTPMNVNEIFMAIAKKLPKNEPQNPGANSARGRGVDLTEPAQPARSQCCSN</sequence>
<keyword id="KW-1003">Cell membrane</keyword>
<keyword id="KW-0966">Cell projection</keyword>
<keyword id="KW-0963">Cytoplasm</keyword>
<keyword id="KW-0968">Cytoplasmic vesicle</keyword>
<keyword id="KW-0254">Endocytosis</keyword>
<keyword id="KW-0967">Endosome</keyword>
<keyword id="KW-0342">GTP-binding</keyword>
<keyword id="KW-0378">Hydrolase</keyword>
<keyword id="KW-0449">Lipoprotein</keyword>
<keyword id="KW-0460">Magnesium</keyword>
<keyword id="KW-0472">Membrane</keyword>
<keyword id="KW-0479">Metal-binding</keyword>
<keyword id="KW-0547">Nucleotide-binding</keyword>
<keyword id="KW-0581">Phagocytosis</keyword>
<keyword id="KW-0597">Phosphoprotein</keyword>
<keyword id="KW-0636">Prenylation</keyword>
<keyword id="KW-0653">Protein transport</keyword>
<keyword id="KW-1185">Reference proteome</keyword>
<keyword id="KW-0813">Transport</keyword>
<feature type="chain" id="PRO_0000430501" description="Ras-related protein Rab-5A">
    <location>
        <begin position="1"/>
        <end position="215"/>
    </location>
</feature>
<feature type="region of interest" description="Disordered" evidence="5">
    <location>
        <begin position="181"/>
        <end position="215"/>
    </location>
</feature>
<feature type="short sequence motif" description="Switch 1" evidence="2">
    <location>
        <begin position="44"/>
        <end position="56"/>
    </location>
</feature>
<feature type="short sequence motif" description="Switch 2" evidence="2">
    <location>
        <begin position="77"/>
        <end position="93"/>
    </location>
</feature>
<feature type="binding site" evidence="2">
    <location>
        <position position="29"/>
    </location>
    <ligand>
        <name>GTP</name>
        <dbReference type="ChEBI" id="CHEBI:37565"/>
    </ligand>
</feature>
<feature type="binding site" evidence="2">
    <location>
        <position position="30"/>
    </location>
    <ligand>
        <name>GTP</name>
        <dbReference type="ChEBI" id="CHEBI:37565"/>
    </ligand>
</feature>
<feature type="binding site" evidence="2">
    <location>
        <position position="32"/>
    </location>
    <ligand>
        <name>GTP</name>
        <dbReference type="ChEBI" id="CHEBI:37565"/>
    </ligand>
</feature>
<feature type="binding site" evidence="2">
    <location>
        <position position="33"/>
    </location>
    <ligand>
        <name>GTP</name>
        <dbReference type="ChEBI" id="CHEBI:37565"/>
    </ligand>
</feature>
<feature type="binding site" evidence="2">
    <location>
        <position position="34"/>
    </location>
    <ligand>
        <name>GTP</name>
        <dbReference type="ChEBI" id="CHEBI:37565"/>
    </ligand>
</feature>
<feature type="binding site" evidence="2">
    <location>
        <position position="34"/>
    </location>
    <ligand>
        <name>Mg(2+)</name>
        <dbReference type="ChEBI" id="CHEBI:18420"/>
    </ligand>
</feature>
<feature type="binding site" evidence="2">
    <location>
        <position position="35"/>
    </location>
    <ligand>
        <name>GTP</name>
        <dbReference type="ChEBI" id="CHEBI:37565"/>
    </ligand>
</feature>
<feature type="binding site" evidence="2">
    <location>
        <position position="46"/>
    </location>
    <ligand>
        <name>GTP</name>
        <dbReference type="ChEBI" id="CHEBI:37565"/>
    </ligand>
</feature>
<feature type="binding site" evidence="2">
    <location>
        <position position="47"/>
    </location>
    <ligand>
        <name>GTP</name>
        <dbReference type="ChEBI" id="CHEBI:37565"/>
    </ligand>
</feature>
<feature type="binding site" evidence="2">
    <location>
        <position position="52"/>
    </location>
    <ligand>
        <name>GTP</name>
        <dbReference type="ChEBI" id="CHEBI:37565"/>
    </ligand>
</feature>
<feature type="binding site" evidence="2">
    <location>
        <position position="52"/>
    </location>
    <ligand>
        <name>Mg(2+)</name>
        <dbReference type="ChEBI" id="CHEBI:18420"/>
    </ligand>
</feature>
<feature type="binding site" evidence="2">
    <location>
        <position position="78"/>
    </location>
    <ligand>
        <name>GTP</name>
        <dbReference type="ChEBI" id="CHEBI:37565"/>
    </ligand>
</feature>
<feature type="binding site" evidence="2">
    <location>
        <position position="133"/>
    </location>
    <ligand>
        <name>GTP</name>
        <dbReference type="ChEBI" id="CHEBI:37565"/>
    </ligand>
</feature>
<feature type="binding site" evidence="2">
    <location>
        <position position="134"/>
    </location>
    <ligand>
        <name>GTP</name>
        <dbReference type="ChEBI" id="CHEBI:37565"/>
    </ligand>
</feature>
<feature type="binding site" evidence="2">
    <location>
        <position position="136"/>
    </location>
    <ligand>
        <name>GTP</name>
        <dbReference type="ChEBI" id="CHEBI:37565"/>
    </ligand>
</feature>
<feature type="binding site" evidence="2">
    <location>
        <position position="164"/>
    </location>
    <ligand>
        <name>GTP</name>
        <dbReference type="ChEBI" id="CHEBI:37565"/>
    </ligand>
</feature>
<feature type="binding site" evidence="2">
    <location>
        <position position="165"/>
    </location>
    <ligand>
        <name>GTP</name>
        <dbReference type="ChEBI" id="CHEBI:37565"/>
    </ligand>
</feature>
<feature type="modified residue" description="Phosphoserine" evidence="2">
    <location>
        <position position="84"/>
    </location>
</feature>
<feature type="lipid moiety-binding region" description="S-geranylgeranyl cysteine" evidence="2">
    <location>
        <position position="212"/>
    </location>
</feature>
<feature type="lipid moiety-binding region" description="S-geranylgeranyl cysteine" evidence="2">
    <location>
        <position position="213"/>
    </location>
</feature>
<feature type="sequence conflict" description="In Ref. 1; AAC26004, 3; EDL82849 and 4; AAI61848." evidence="7" ref="1 3 4">
    <original>P</original>
    <variation>S</variation>
    <location>
        <position position="167"/>
    </location>
</feature>
<dbReference type="EC" id="3.6.5.2" evidence="2"/>
<dbReference type="EMBL" id="AF072935">
    <property type="protein sequence ID" value="AAC26004.1"/>
    <property type="molecule type" value="mRNA"/>
</dbReference>
<dbReference type="EMBL" id="AABR06079878">
    <property type="status" value="NOT_ANNOTATED_CDS"/>
    <property type="molecule type" value="Genomic_DNA"/>
</dbReference>
<dbReference type="EMBL" id="CH474184">
    <property type="protein sequence ID" value="EDL82849.1"/>
    <property type="molecule type" value="Genomic_DNA"/>
</dbReference>
<dbReference type="EMBL" id="BC161848">
    <property type="protein sequence ID" value="AAI61848.1"/>
    <property type="molecule type" value="mRNA"/>
</dbReference>
<dbReference type="RefSeq" id="NP_073183.1">
    <property type="nucleotide sequence ID" value="NM_022692.1"/>
</dbReference>
<dbReference type="RefSeq" id="XP_003752788.1">
    <property type="nucleotide sequence ID" value="XM_003752740.4"/>
</dbReference>
<dbReference type="SMR" id="M0RC99"/>
<dbReference type="BioGRID" id="249171">
    <property type="interactions" value="2"/>
</dbReference>
<dbReference type="CORUM" id="M0RC99"/>
<dbReference type="FunCoup" id="M0RC99">
    <property type="interactions" value="4596"/>
</dbReference>
<dbReference type="IntAct" id="M0RC99">
    <property type="interactions" value="4"/>
</dbReference>
<dbReference type="MINT" id="M0RC99"/>
<dbReference type="STRING" id="10116.ENSRNOP00000031520"/>
<dbReference type="PhosphoSitePlus" id="M0RC99"/>
<dbReference type="jPOST" id="M0RC99"/>
<dbReference type="PaxDb" id="10116-ENSRNOP00000067210"/>
<dbReference type="Ensembl" id="ENSRNOT00000100183.1">
    <property type="protein sequence ID" value="ENSRNOP00000096260.1"/>
    <property type="gene ID" value="ENSRNOG00000062595.1"/>
</dbReference>
<dbReference type="GeneID" id="64633"/>
<dbReference type="KEGG" id="rno:100361891"/>
<dbReference type="KEGG" id="rno:64633"/>
<dbReference type="AGR" id="RGD:2319287"/>
<dbReference type="AGR" id="RGD:620936"/>
<dbReference type="CTD" id="100361891"/>
<dbReference type="CTD" id="5868"/>
<dbReference type="RGD" id="620936">
    <property type="gene designation" value="Rab5a"/>
</dbReference>
<dbReference type="eggNOG" id="KOG0092">
    <property type="taxonomic scope" value="Eukaryota"/>
</dbReference>
<dbReference type="GeneTree" id="ENSGT00940000154337"/>
<dbReference type="InParanoid" id="M0RC99"/>
<dbReference type="OMA" id="SRTCCSN"/>
<dbReference type="OrthoDB" id="8376at9989"/>
<dbReference type="TreeFam" id="TF300199"/>
<dbReference type="Reactome" id="R-RNO-1660499">
    <property type="pathway name" value="Synthesis of PIPs at the plasma membrane"/>
</dbReference>
<dbReference type="Reactome" id="R-RNO-8856828">
    <property type="pathway name" value="Clathrin-mediated endocytosis"/>
</dbReference>
<dbReference type="Reactome" id="R-RNO-8873719">
    <property type="pathway name" value="RAB geranylgeranylation"/>
</dbReference>
<dbReference type="Reactome" id="R-RNO-8876198">
    <property type="pathway name" value="RAB GEFs exchange GTP for GDP on RABs"/>
</dbReference>
<dbReference type="Reactome" id="R-RNO-983231">
    <property type="pathway name" value="Factors involved in megakaryocyte development and platelet production"/>
</dbReference>
<dbReference type="PRO" id="PR:M0RC99"/>
<dbReference type="Proteomes" id="UP000002494">
    <property type="component" value="Chromosome 14"/>
</dbReference>
<dbReference type="Proteomes" id="UP000234681">
    <property type="component" value="Unassembled WGS sequence"/>
</dbReference>
<dbReference type="GO" id="GO:0015629">
    <property type="term" value="C:actin cytoskeleton"/>
    <property type="evidence" value="ECO:0000266"/>
    <property type="project" value="RGD"/>
</dbReference>
<dbReference type="GO" id="GO:0030424">
    <property type="term" value="C:axon"/>
    <property type="evidence" value="ECO:0000314"/>
    <property type="project" value="ParkinsonsUK-UCL"/>
</dbReference>
<dbReference type="GO" id="GO:0043679">
    <property type="term" value="C:axon terminus"/>
    <property type="evidence" value="ECO:0000314"/>
    <property type="project" value="ParkinsonsUK-UCL"/>
</dbReference>
<dbReference type="GO" id="GO:0005737">
    <property type="term" value="C:cytoplasm"/>
    <property type="evidence" value="ECO:0000266"/>
    <property type="project" value="RGD"/>
</dbReference>
<dbReference type="GO" id="GO:0098559">
    <property type="term" value="C:cytoplasmic side of early endosome membrane"/>
    <property type="evidence" value="ECO:0000266"/>
    <property type="project" value="RGD"/>
</dbReference>
<dbReference type="GO" id="GO:0005829">
    <property type="term" value="C:cytosol"/>
    <property type="evidence" value="ECO:0000266"/>
    <property type="project" value="RGD"/>
</dbReference>
<dbReference type="GO" id="GO:0030425">
    <property type="term" value="C:dendrite"/>
    <property type="evidence" value="ECO:0000314"/>
    <property type="project" value="ParkinsonsUK-UCL"/>
</dbReference>
<dbReference type="GO" id="GO:0005769">
    <property type="term" value="C:early endosome"/>
    <property type="evidence" value="ECO:0000314"/>
    <property type="project" value="MGI"/>
</dbReference>
<dbReference type="GO" id="GO:0032009">
    <property type="term" value="C:early phagosome"/>
    <property type="evidence" value="ECO:0000250"/>
    <property type="project" value="UniProtKB"/>
</dbReference>
<dbReference type="GO" id="GO:0030139">
    <property type="term" value="C:endocytic vesicle"/>
    <property type="evidence" value="ECO:0000266"/>
    <property type="project" value="RGD"/>
</dbReference>
<dbReference type="GO" id="GO:0012505">
    <property type="term" value="C:endomembrane system"/>
    <property type="evidence" value="ECO:0000318"/>
    <property type="project" value="GO_Central"/>
</dbReference>
<dbReference type="GO" id="GO:0005768">
    <property type="term" value="C:endosome"/>
    <property type="evidence" value="ECO:0000314"/>
    <property type="project" value="ParkinsonsUK-UCL"/>
</dbReference>
<dbReference type="GO" id="GO:0010008">
    <property type="term" value="C:endosome membrane"/>
    <property type="evidence" value="ECO:0000266"/>
    <property type="project" value="RGD"/>
</dbReference>
<dbReference type="GO" id="GO:0070382">
    <property type="term" value="C:exocytic vesicle"/>
    <property type="evidence" value="ECO:0000266"/>
    <property type="project" value="RGD"/>
</dbReference>
<dbReference type="GO" id="GO:0098978">
    <property type="term" value="C:glutamatergic synapse"/>
    <property type="evidence" value="ECO:0000314"/>
    <property type="project" value="SynGO"/>
</dbReference>
<dbReference type="GO" id="GO:0005811">
    <property type="term" value="C:lipid droplet"/>
    <property type="evidence" value="ECO:0000266"/>
    <property type="project" value="RGD"/>
</dbReference>
<dbReference type="GO" id="GO:0042470">
    <property type="term" value="C:melanosome"/>
    <property type="evidence" value="ECO:0007669"/>
    <property type="project" value="UniProtKB-SubCell"/>
</dbReference>
<dbReference type="GO" id="GO:0045121">
    <property type="term" value="C:membrane raft"/>
    <property type="evidence" value="ECO:0000266"/>
    <property type="project" value="RGD"/>
</dbReference>
<dbReference type="GO" id="GO:0043025">
    <property type="term" value="C:neuronal cell body"/>
    <property type="evidence" value="ECO:0000314"/>
    <property type="project" value="ParkinsonsUK-UCL"/>
</dbReference>
<dbReference type="GO" id="GO:0048471">
    <property type="term" value="C:perinuclear region of cytoplasm"/>
    <property type="evidence" value="ECO:0000314"/>
    <property type="project" value="RGD"/>
</dbReference>
<dbReference type="GO" id="GO:0045335">
    <property type="term" value="C:phagocytic vesicle"/>
    <property type="evidence" value="ECO:0000250"/>
    <property type="project" value="UniProtKB"/>
</dbReference>
<dbReference type="GO" id="GO:0030670">
    <property type="term" value="C:phagocytic vesicle membrane"/>
    <property type="evidence" value="ECO:0007669"/>
    <property type="project" value="UniProtKB-SubCell"/>
</dbReference>
<dbReference type="GO" id="GO:0005886">
    <property type="term" value="C:plasma membrane"/>
    <property type="evidence" value="ECO:0000266"/>
    <property type="project" value="RGD"/>
</dbReference>
<dbReference type="GO" id="GO:0098844">
    <property type="term" value="C:postsynaptic endocytic zone membrane"/>
    <property type="evidence" value="ECO:0000314"/>
    <property type="project" value="SynGO"/>
</dbReference>
<dbReference type="GO" id="GO:0098830">
    <property type="term" value="C:presynaptic endosome"/>
    <property type="evidence" value="ECO:0000314"/>
    <property type="project" value="SynGO"/>
</dbReference>
<dbReference type="GO" id="GO:0032991">
    <property type="term" value="C:protein-containing complex"/>
    <property type="evidence" value="ECO:0000314"/>
    <property type="project" value="RGD"/>
</dbReference>
<dbReference type="GO" id="GO:0055037">
    <property type="term" value="C:recycling endosome"/>
    <property type="evidence" value="ECO:0000314"/>
    <property type="project" value="RGD"/>
</dbReference>
<dbReference type="GO" id="GO:0001726">
    <property type="term" value="C:ruffle"/>
    <property type="evidence" value="ECO:0000266"/>
    <property type="project" value="RGD"/>
</dbReference>
<dbReference type="GO" id="GO:0036477">
    <property type="term" value="C:somatodendritic compartment"/>
    <property type="evidence" value="ECO:0000314"/>
    <property type="project" value="ParkinsonsUK-UCL"/>
</dbReference>
<dbReference type="GO" id="GO:0097443">
    <property type="term" value="C:sorting endosome"/>
    <property type="evidence" value="ECO:0000266"/>
    <property type="project" value="RGD"/>
</dbReference>
<dbReference type="GO" id="GO:0008021">
    <property type="term" value="C:synaptic vesicle"/>
    <property type="evidence" value="ECO:0000314"/>
    <property type="project" value="ParkinsonsUK-UCL"/>
</dbReference>
<dbReference type="GO" id="GO:0030672">
    <property type="term" value="C:synaptic vesicle membrane"/>
    <property type="evidence" value="ECO:0000314"/>
    <property type="project" value="SynGO-UCL"/>
</dbReference>
<dbReference type="GO" id="GO:0043195">
    <property type="term" value="C:terminal bouton"/>
    <property type="evidence" value="ECO:0007005"/>
    <property type="project" value="ParkinsonsUK-UCL"/>
</dbReference>
<dbReference type="GO" id="GO:0042589">
    <property type="term" value="C:zymogen granule membrane"/>
    <property type="evidence" value="ECO:0000314"/>
    <property type="project" value="RGD"/>
</dbReference>
<dbReference type="GO" id="GO:0003925">
    <property type="term" value="F:G protein activity"/>
    <property type="evidence" value="ECO:0007669"/>
    <property type="project" value="UniProtKB-EC"/>
</dbReference>
<dbReference type="GO" id="GO:0019003">
    <property type="term" value="F:GDP binding"/>
    <property type="evidence" value="ECO:0000266"/>
    <property type="project" value="RGD"/>
</dbReference>
<dbReference type="GO" id="GO:0051021">
    <property type="term" value="F:GDP-dissociation inhibitor binding"/>
    <property type="evidence" value="ECO:0000314"/>
    <property type="project" value="RGD"/>
</dbReference>
<dbReference type="GO" id="GO:0005525">
    <property type="term" value="F:GTP binding"/>
    <property type="evidence" value="ECO:0000266"/>
    <property type="project" value="RGD"/>
</dbReference>
<dbReference type="GO" id="GO:0003924">
    <property type="term" value="F:GTPase activity"/>
    <property type="evidence" value="ECO:0000266"/>
    <property type="project" value="RGD"/>
</dbReference>
<dbReference type="GO" id="GO:0019001">
    <property type="term" value="F:guanyl nucleotide binding"/>
    <property type="evidence" value="ECO:0000266"/>
    <property type="project" value="RGD"/>
</dbReference>
<dbReference type="GO" id="GO:0150093">
    <property type="term" value="P:amyloid-beta clearance by transcytosis"/>
    <property type="evidence" value="ECO:0000266"/>
    <property type="project" value="RGD"/>
</dbReference>
<dbReference type="GO" id="GO:0060070">
    <property type="term" value="P:canonical Wnt signaling pathway"/>
    <property type="evidence" value="ECO:0000266"/>
    <property type="project" value="RGD"/>
</dbReference>
<dbReference type="GO" id="GO:0045022">
    <property type="term" value="P:early endosome to late endosome transport"/>
    <property type="evidence" value="ECO:0000266"/>
    <property type="project" value="RGD"/>
</dbReference>
<dbReference type="GO" id="GO:0006897">
    <property type="term" value="P:endocytosis"/>
    <property type="evidence" value="ECO:0000315"/>
    <property type="project" value="RGD"/>
</dbReference>
<dbReference type="GO" id="GO:0007032">
    <property type="term" value="P:endosome organization"/>
    <property type="evidence" value="ECO:0000315"/>
    <property type="project" value="ParkinsonsUK-UCL"/>
</dbReference>
<dbReference type="GO" id="GO:0006886">
    <property type="term" value="P:intracellular protein transport"/>
    <property type="evidence" value="ECO:0000318"/>
    <property type="project" value="GO_Central"/>
</dbReference>
<dbReference type="GO" id="GO:0006909">
    <property type="term" value="P:phagocytosis"/>
    <property type="evidence" value="ECO:0007669"/>
    <property type="project" value="UniProtKB-KW"/>
</dbReference>
<dbReference type="GO" id="GO:0045921">
    <property type="term" value="P:positive regulation of exocytosis"/>
    <property type="evidence" value="ECO:0000266"/>
    <property type="project" value="RGD"/>
</dbReference>
<dbReference type="GO" id="GO:0014911">
    <property type="term" value="P:positive regulation of smooth muscle cell migration"/>
    <property type="evidence" value="ECO:0000315"/>
    <property type="project" value="RGD"/>
</dbReference>
<dbReference type="GO" id="GO:0048661">
    <property type="term" value="P:positive regulation of smooth muscle cell proliferation"/>
    <property type="evidence" value="ECO:0000315"/>
    <property type="project" value="RGD"/>
</dbReference>
<dbReference type="GO" id="GO:0098884">
    <property type="term" value="P:postsynaptic neurotransmitter receptor internalization"/>
    <property type="evidence" value="ECO:0000314"/>
    <property type="project" value="SynGO"/>
</dbReference>
<dbReference type="GO" id="GO:0031623">
    <property type="term" value="P:receptor internalization"/>
    <property type="evidence" value="ECO:0000266"/>
    <property type="project" value="RGD"/>
</dbReference>
<dbReference type="GO" id="GO:0051036">
    <property type="term" value="P:regulation of endosome size"/>
    <property type="evidence" value="ECO:0000266"/>
    <property type="project" value="RGD"/>
</dbReference>
<dbReference type="GO" id="GO:0051489">
    <property type="term" value="P:regulation of filopodium assembly"/>
    <property type="evidence" value="ECO:0000266"/>
    <property type="project" value="RGD"/>
</dbReference>
<dbReference type="GO" id="GO:0048169">
    <property type="term" value="P:regulation of long-term neuronal synaptic plasticity"/>
    <property type="evidence" value="ECO:0000315"/>
    <property type="project" value="RGD"/>
</dbReference>
<dbReference type="GO" id="GO:2000300">
    <property type="term" value="P:regulation of synaptic vesicle exocytosis"/>
    <property type="evidence" value="ECO:0000250"/>
    <property type="project" value="ParkinsonsUK-UCL"/>
</dbReference>
<dbReference type="GO" id="GO:0048488">
    <property type="term" value="P:synaptic vesicle endocytosis"/>
    <property type="evidence" value="ECO:0000314"/>
    <property type="project" value="SynGO"/>
</dbReference>
<dbReference type="GO" id="GO:0036465">
    <property type="term" value="P:synaptic vesicle recycling"/>
    <property type="evidence" value="ECO:0000266"/>
    <property type="project" value="RGD"/>
</dbReference>
<dbReference type="GO" id="GO:0016192">
    <property type="term" value="P:vesicle-mediated transport"/>
    <property type="evidence" value="ECO:0000303"/>
    <property type="project" value="RGD"/>
</dbReference>
<dbReference type="CDD" id="cd01860">
    <property type="entry name" value="Rab5_related"/>
    <property type="match status" value="1"/>
</dbReference>
<dbReference type="FunFam" id="3.40.50.300:FF:000180">
    <property type="entry name" value="Member RAS oncogene family"/>
    <property type="match status" value="1"/>
</dbReference>
<dbReference type="Gene3D" id="3.40.50.300">
    <property type="entry name" value="P-loop containing nucleotide triphosphate hydrolases"/>
    <property type="match status" value="1"/>
</dbReference>
<dbReference type="InterPro" id="IPR027417">
    <property type="entry name" value="P-loop_NTPase"/>
</dbReference>
<dbReference type="InterPro" id="IPR005225">
    <property type="entry name" value="Small_GTP-bd"/>
</dbReference>
<dbReference type="InterPro" id="IPR001806">
    <property type="entry name" value="Small_GTPase"/>
</dbReference>
<dbReference type="NCBIfam" id="TIGR00231">
    <property type="entry name" value="small_GTP"/>
    <property type="match status" value="1"/>
</dbReference>
<dbReference type="PANTHER" id="PTHR47978">
    <property type="match status" value="1"/>
</dbReference>
<dbReference type="Pfam" id="PF00071">
    <property type="entry name" value="Ras"/>
    <property type="match status" value="1"/>
</dbReference>
<dbReference type="PRINTS" id="PR00449">
    <property type="entry name" value="RASTRNSFRMNG"/>
</dbReference>
<dbReference type="SMART" id="SM00175">
    <property type="entry name" value="RAB"/>
    <property type="match status" value="1"/>
</dbReference>
<dbReference type="SMART" id="SM00176">
    <property type="entry name" value="RAN"/>
    <property type="match status" value="1"/>
</dbReference>
<dbReference type="SMART" id="SM00173">
    <property type="entry name" value="RAS"/>
    <property type="match status" value="1"/>
</dbReference>
<dbReference type="SMART" id="SM00174">
    <property type="entry name" value="RHO"/>
    <property type="match status" value="1"/>
</dbReference>
<dbReference type="SUPFAM" id="SSF52540">
    <property type="entry name" value="P-loop containing nucleoside triphosphate hydrolases"/>
    <property type="match status" value="1"/>
</dbReference>
<dbReference type="PROSITE" id="PS51419">
    <property type="entry name" value="RAB"/>
    <property type="match status" value="1"/>
</dbReference>
<comment type="function">
    <text evidence="1 2 4">The small GTPases Rab are key regulators of intracellular membrane trafficking, from the formation of transport vesicles to their fusion with membranes. Rabs cycle between an inactive GDP-bound form and an active GTP-bound form that is able to recruit to membranes different sets of downstream effectors directly responsible for vesicle formation, movement, tethering and fusion. RAB5A is required for the fusion of plasma membranes and early endosomes. Contributes to the regulation of filopodia extension. Required for the exosomal release of SDCBP, CD63, PDCD6IP and syndecan. Regulates maturation of apoptotic cell-containing phagosomes, probably downstream of DYN2 and PIK3C3.</text>
</comment>
<comment type="catalytic activity">
    <reaction evidence="2">
        <text>GTP + H2O = GDP + phosphate + H(+)</text>
        <dbReference type="Rhea" id="RHEA:19669"/>
        <dbReference type="ChEBI" id="CHEBI:15377"/>
        <dbReference type="ChEBI" id="CHEBI:15378"/>
        <dbReference type="ChEBI" id="CHEBI:37565"/>
        <dbReference type="ChEBI" id="CHEBI:43474"/>
        <dbReference type="ChEBI" id="CHEBI:58189"/>
        <dbReference type="EC" id="3.6.5.2"/>
    </reaction>
    <physiologicalReaction direction="left-to-right" evidence="2">
        <dbReference type="Rhea" id="RHEA:19670"/>
    </physiologicalReaction>
</comment>
<comment type="cofactor">
    <cofactor evidence="2">
        <name>Mg(2+)</name>
        <dbReference type="ChEBI" id="CHEBI:18420"/>
    </cofactor>
</comment>
<comment type="activity regulation">
    <text evidence="1 7">Regulated by guanine nucleotide exchange factors (GEFs) including RINL, which promote the exchange of bound GDP for free GTP (By similarity). Regulated by GTPase activating proteins (GAPs) which increase the GTP hydrolysis activity (Probable). Inhibited by GDP dissociation inhibitors (GDIs) (Probable).</text>
</comment>
<comment type="subunit">
    <text evidence="1 2 3 4">Interacts with GDI1; this promotes dissociation from membranes; phosphorylation at Ser-84 disrupts this interaction (By similarity). Interacts with GDI2; phosphorylation at Ser-84 disrupts the interaction (By similarity). Interacts with EEA1. Interacts with RIN1 and GAPVD1, which regulate its pathway, probably by acting as a GEF. Interacts with ALS2CL, SUN2, ZFYVE20 and RUFY1. Interacts with RABEP1; one RABEP1 homodimer binds two RAB5A chains, but at opposite sides of the dimer. Interacts with SGSM1, SGSM3 and PIK3CB. Interacts with RINL. May be a component of a complex composed of RAB5A, DYN2 and PIK3C3. Does not interact with the BLOC-3 complex (heterodimer of HPS1 and HPS4). Interacts with CLN5. Interacts with APPL2 (By similarity). Interacts with F8A1/F8A2/F8A3 (By similarity). Found in a complex with F8A1/F8A2/F8A3, HTT and RAB5A; mediates the recruitment of HTT by RAB5A onto early endosomes (By similarity). Interacts with ATP9A (By similarity). Interacts with PPP1R21; mediates the recruitment of FERRY complex by RAB5A onto early endosomes (By similarity).</text>
</comment>
<comment type="subcellular location">
    <subcellularLocation>
        <location evidence="2">Cell membrane</location>
        <topology evidence="2">Lipid-anchor</topology>
        <orientation evidence="1">Cytoplasmic side</orientation>
    </subcellularLocation>
    <subcellularLocation>
        <location evidence="2">Early endosome membrane</location>
        <topology evidence="2">Lipid-anchor</topology>
    </subcellularLocation>
    <subcellularLocation>
        <location evidence="2">Melanosome</location>
    </subcellularLocation>
    <subcellularLocation>
        <location evidence="2">Cytoplasmic vesicle</location>
    </subcellularLocation>
    <subcellularLocation>
        <location evidence="1">Cell projection</location>
        <location evidence="1">Ruffle</location>
    </subcellularLocation>
    <subcellularLocation>
        <location evidence="2">Membrane</location>
    </subcellularLocation>
    <subcellularLocation>
        <location evidence="2">Cytoplasm</location>
        <location evidence="2">Cytosol</location>
    </subcellularLocation>
    <subcellularLocation>
        <location evidence="4">Cytoplasmic vesicle</location>
        <location evidence="4">Phagosome membrane</location>
    </subcellularLocation>
    <subcellularLocation>
        <location evidence="2">Endosome membrane</location>
    </subcellularLocation>
    <text evidence="2">Enriched in stage I melanosomes. Alternates between membrane-bound and cytosolic forms.</text>
</comment>
<comment type="domain">
    <text evidence="2">Switch 1, switch 2 and the interswitch regions are characteristic of Rab GTPases and mediate the interactions with Rab downstream effectors. The switch regions undergo conformational changes upon nucleotide binding which drive interaction with specific sets of effector proteins, with most effectors only binding to GTP-bound Rab.</text>
</comment>
<comment type="PTM">
    <text evidence="2">Phosphorylation of Ser-84 in the switch II region by LRRK2 prevents the association of RAB regulatory proteins, including RAB GDP dissociation inhibitors GDI1 and GDI2.</text>
</comment>
<comment type="similarity">
    <text evidence="7">Belongs to the small GTPase superfamily. Rab family.</text>
</comment>
<accession>M0RC99</accession>
<accession>O88565</accession>
<organism>
    <name type="scientific">Rattus norvegicus</name>
    <name type="common">Rat</name>
    <dbReference type="NCBI Taxonomy" id="10116"/>
    <lineage>
        <taxon>Eukaryota</taxon>
        <taxon>Metazoa</taxon>
        <taxon>Chordata</taxon>
        <taxon>Craniata</taxon>
        <taxon>Vertebrata</taxon>
        <taxon>Euteleostomi</taxon>
        <taxon>Mammalia</taxon>
        <taxon>Eutheria</taxon>
        <taxon>Euarchontoglires</taxon>
        <taxon>Glires</taxon>
        <taxon>Rodentia</taxon>
        <taxon>Myomorpha</taxon>
        <taxon>Muroidea</taxon>
        <taxon>Muridae</taxon>
        <taxon>Murinae</taxon>
        <taxon>Rattus</taxon>
    </lineage>
</organism>
<proteinExistence type="evidence at transcript level"/>